<name>STP1_LISMO</name>
<evidence type="ECO:0000250" key="1"/>
<evidence type="ECO:0000255" key="2">
    <source>
        <dbReference type="PROSITE-ProRule" id="PRU01082"/>
    </source>
</evidence>
<evidence type="ECO:0000256" key="3">
    <source>
        <dbReference type="SAM" id="MobiDB-lite"/>
    </source>
</evidence>
<evidence type="ECO:0000269" key="4">
    <source>
    </source>
</evidence>
<evidence type="ECO:0000305" key="5"/>
<keyword id="KW-0963">Cytoplasm</keyword>
<keyword id="KW-0378">Hydrolase</keyword>
<keyword id="KW-0464">Manganese</keyword>
<keyword id="KW-0472">Membrane</keyword>
<keyword id="KW-0479">Metal-binding</keyword>
<keyword id="KW-0904">Protein phosphatase</keyword>
<keyword id="KW-1185">Reference proteome</keyword>
<reference key="1">
    <citation type="journal article" date="2001" name="Science">
        <title>Comparative genomics of Listeria species.</title>
        <authorList>
            <person name="Glaser P."/>
            <person name="Frangeul L."/>
            <person name="Buchrieser C."/>
            <person name="Rusniok C."/>
            <person name="Amend A."/>
            <person name="Baquero F."/>
            <person name="Berche P."/>
            <person name="Bloecker H."/>
            <person name="Brandt P."/>
            <person name="Chakraborty T."/>
            <person name="Charbit A."/>
            <person name="Chetouani F."/>
            <person name="Couve E."/>
            <person name="de Daruvar A."/>
            <person name="Dehoux P."/>
            <person name="Domann E."/>
            <person name="Dominguez-Bernal G."/>
            <person name="Duchaud E."/>
            <person name="Durant L."/>
            <person name="Dussurget O."/>
            <person name="Entian K.-D."/>
            <person name="Fsihi H."/>
            <person name="Garcia-del Portillo F."/>
            <person name="Garrido P."/>
            <person name="Gautier L."/>
            <person name="Goebel W."/>
            <person name="Gomez-Lopez N."/>
            <person name="Hain T."/>
            <person name="Hauf J."/>
            <person name="Jackson D."/>
            <person name="Jones L.-M."/>
            <person name="Kaerst U."/>
            <person name="Kreft J."/>
            <person name="Kuhn M."/>
            <person name="Kunst F."/>
            <person name="Kurapkat G."/>
            <person name="Madueno E."/>
            <person name="Maitournam A."/>
            <person name="Mata Vicente J."/>
            <person name="Ng E."/>
            <person name="Nedjari H."/>
            <person name="Nordsiek G."/>
            <person name="Novella S."/>
            <person name="de Pablos B."/>
            <person name="Perez-Diaz J.-C."/>
            <person name="Purcell R."/>
            <person name="Remmel B."/>
            <person name="Rose M."/>
            <person name="Schlueter T."/>
            <person name="Simoes N."/>
            <person name="Tierrez A."/>
            <person name="Vazquez-Boland J.-A."/>
            <person name="Voss H."/>
            <person name="Wehland J."/>
            <person name="Cossart P."/>
        </authorList>
    </citation>
    <scope>NUCLEOTIDE SEQUENCE [LARGE SCALE GENOMIC DNA]</scope>
    <source>
        <strain>ATCC BAA-679 / EGD-e</strain>
    </source>
</reference>
<reference key="2">
    <citation type="journal article" date="2005" name="Mol. Microbiol.">
        <title>Translation elongation factor EF-Tu is a target for Stp, a serine-threonine phosphatase involved in virulence of Listeria monocytogenes.</title>
        <authorList>
            <person name="Archambaud C."/>
            <person name="Gouin E."/>
            <person name="Pizarro-Cerda J."/>
            <person name="Cossart P."/>
            <person name="Dussurget O."/>
        </authorList>
    </citation>
    <scope>FUNCTION AS PHOSPHATASE</scope>
    <scope>SUBCELLULAR LOCATION</scope>
    <scope>COFACTOR</scope>
    <scope>BIOPHYSICOCHEMICAL PROPERTIES</scope>
    <scope>DISRUPTION PHENOTYPE</scope>
    <scope>IDENTIFICATION OF SUBSTRATE</scope>
    <source>
        <strain>ATCC BAA-679 / EGD-e</strain>
    </source>
</reference>
<gene>
    <name type="primary">stp</name>
    <name type="ordered locus">lmo1821</name>
</gene>
<dbReference type="EC" id="3.1.3.16"/>
<dbReference type="EMBL" id="AL591981">
    <property type="protein sequence ID" value="CAC99899.1"/>
    <property type="molecule type" value="Genomic_DNA"/>
</dbReference>
<dbReference type="PIR" id="AE1302">
    <property type="entry name" value="AE1302"/>
</dbReference>
<dbReference type="RefSeq" id="NP_465346.1">
    <property type="nucleotide sequence ID" value="NC_003210.1"/>
</dbReference>
<dbReference type="RefSeq" id="WP_003723065.1">
    <property type="nucleotide sequence ID" value="NZ_CP149495.1"/>
</dbReference>
<dbReference type="SMR" id="Q8Y678"/>
<dbReference type="STRING" id="169963.gene:17594506"/>
<dbReference type="PaxDb" id="169963-lmo1821"/>
<dbReference type="EnsemblBacteria" id="CAC99899">
    <property type="protein sequence ID" value="CAC99899"/>
    <property type="gene ID" value="CAC99899"/>
</dbReference>
<dbReference type="GeneID" id="985901"/>
<dbReference type="KEGG" id="lmo:lmo1821"/>
<dbReference type="PATRIC" id="fig|169963.11.peg.1866"/>
<dbReference type="eggNOG" id="COG0631">
    <property type="taxonomic scope" value="Bacteria"/>
</dbReference>
<dbReference type="HOGENOM" id="CLU_034545_4_1_9"/>
<dbReference type="OrthoDB" id="9801841at2"/>
<dbReference type="PhylomeDB" id="Q8Y678"/>
<dbReference type="BioCyc" id="LMON169963:LMO1821-MONOMER"/>
<dbReference type="BRENDA" id="3.1.3.16">
    <property type="organism ID" value="15002"/>
</dbReference>
<dbReference type="SABIO-RK" id="Q8Y678"/>
<dbReference type="Proteomes" id="UP000000817">
    <property type="component" value="Chromosome"/>
</dbReference>
<dbReference type="GO" id="GO:0005737">
    <property type="term" value="C:cytoplasm"/>
    <property type="evidence" value="ECO:0007669"/>
    <property type="project" value="UniProtKB-SubCell"/>
</dbReference>
<dbReference type="GO" id="GO:0016020">
    <property type="term" value="C:membrane"/>
    <property type="evidence" value="ECO:0007669"/>
    <property type="project" value="UniProtKB-SubCell"/>
</dbReference>
<dbReference type="GO" id="GO:0046872">
    <property type="term" value="F:metal ion binding"/>
    <property type="evidence" value="ECO:0007669"/>
    <property type="project" value="UniProtKB-KW"/>
</dbReference>
<dbReference type="GO" id="GO:0004722">
    <property type="term" value="F:protein serine/threonine phosphatase activity"/>
    <property type="evidence" value="ECO:0007669"/>
    <property type="project" value="UniProtKB-EC"/>
</dbReference>
<dbReference type="GO" id="GO:0007165">
    <property type="term" value="P:signal transduction"/>
    <property type="evidence" value="ECO:0000318"/>
    <property type="project" value="GO_Central"/>
</dbReference>
<dbReference type="CDD" id="cd00143">
    <property type="entry name" value="PP2Cc"/>
    <property type="match status" value="1"/>
</dbReference>
<dbReference type="FunFam" id="3.60.40.10:FF:000002">
    <property type="entry name" value="Serine/threonine phosphatase stp"/>
    <property type="match status" value="1"/>
</dbReference>
<dbReference type="Gene3D" id="3.60.40.10">
    <property type="entry name" value="PPM-type phosphatase domain"/>
    <property type="match status" value="1"/>
</dbReference>
<dbReference type="InterPro" id="IPR015655">
    <property type="entry name" value="PP2C"/>
</dbReference>
<dbReference type="InterPro" id="IPR036457">
    <property type="entry name" value="PPM-type-like_dom_sf"/>
</dbReference>
<dbReference type="InterPro" id="IPR001932">
    <property type="entry name" value="PPM-type_phosphatase-like_dom"/>
</dbReference>
<dbReference type="NCBIfam" id="NF033484">
    <property type="entry name" value="Stp1_PP2C_phos"/>
    <property type="match status" value="1"/>
</dbReference>
<dbReference type="PANTHER" id="PTHR47992">
    <property type="entry name" value="PROTEIN PHOSPHATASE"/>
    <property type="match status" value="1"/>
</dbReference>
<dbReference type="Pfam" id="PF13672">
    <property type="entry name" value="PP2C_2"/>
    <property type="match status" value="1"/>
</dbReference>
<dbReference type="SMART" id="SM00331">
    <property type="entry name" value="PP2C_SIG"/>
    <property type="match status" value="1"/>
</dbReference>
<dbReference type="SMART" id="SM00332">
    <property type="entry name" value="PP2Cc"/>
    <property type="match status" value="1"/>
</dbReference>
<dbReference type="SUPFAM" id="SSF81606">
    <property type="entry name" value="PP2C-like"/>
    <property type="match status" value="1"/>
</dbReference>
<dbReference type="PROSITE" id="PS51746">
    <property type="entry name" value="PPM_2"/>
    <property type="match status" value="1"/>
</dbReference>
<feature type="chain" id="PRO_0000363063" description="Serine/threonine phosphatase stp">
    <location>
        <begin position="1"/>
        <end position="252"/>
    </location>
</feature>
<feature type="domain" description="PPM-type phosphatase" evidence="2">
    <location>
        <begin position="2"/>
        <end position="242"/>
    </location>
</feature>
<feature type="region of interest" description="Disordered" evidence="3">
    <location>
        <begin position="1"/>
        <end position="23"/>
    </location>
</feature>
<feature type="compositionally biased region" description="Basic and acidic residues" evidence="3">
    <location>
        <begin position="1"/>
        <end position="18"/>
    </location>
</feature>
<feature type="binding site" evidence="1">
    <location>
        <position position="36"/>
    </location>
    <ligand>
        <name>Mn(2+)</name>
        <dbReference type="ChEBI" id="CHEBI:29035"/>
        <label>1</label>
    </ligand>
</feature>
<feature type="binding site" evidence="1">
    <location>
        <position position="36"/>
    </location>
    <ligand>
        <name>Mn(2+)</name>
        <dbReference type="ChEBI" id="CHEBI:29035"/>
        <label>2</label>
    </ligand>
</feature>
<feature type="binding site" evidence="1">
    <location>
        <position position="37"/>
    </location>
    <ligand>
        <name>Mn(2+)</name>
        <dbReference type="ChEBI" id="CHEBI:29035"/>
        <label>1</label>
    </ligand>
</feature>
<feature type="binding site" evidence="1">
    <location>
        <position position="194"/>
    </location>
    <ligand>
        <name>Mn(2+)</name>
        <dbReference type="ChEBI" id="CHEBI:29035"/>
        <label>2</label>
    </ligand>
</feature>
<feature type="binding site" evidence="1">
    <location>
        <position position="233"/>
    </location>
    <ligand>
        <name>Mn(2+)</name>
        <dbReference type="ChEBI" id="CHEBI:29035"/>
        <label>2</label>
    </ligand>
</feature>
<accession>Q8Y678</accession>
<comment type="function">
    <text evidence="4">Protein phosphatase that dephosphorylates EF-Tu.</text>
</comment>
<comment type="catalytic activity">
    <reaction>
        <text>O-phospho-L-seryl-[protein] + H2O = L-seryl-[protein] + phosphate</text>
        <dbReference type="Rhea" id="RHEA:20629"/>
        <dbReference type="Rhea" id="RHEA-COMP:9863"/>
        <dbReference type="Rhea" id="RHEA-COMP:11604"/>
        <dbReference type="ChEBI" id="CHEBI:15377"/>
        <dbReference type="ChEBI" id="CHEBI:29999"/>
        <dbReference type="ChEBI" id="CHEBI:43474"/>
        <dbReference type="ChEBI" id="CHEBI:83421"/>
        <dbReference type="EC" id="3.1.3.16"/>
    </reaction>
</comment>
<comment type="catalytic activity">
    <reaction>
        <text>O-phospho-L-threonyl-[protein] + H2O = L-threonyl-[protein] + phosphate</text>
        <dbReference type="Rhea" id="RHEA:47004"/>
        <dbReference type="Rhea" id="RHEA-COMP:11060"/>
        <dbReference type="Rhea" id="RHEA-COMP:11605"/>
        <dbReference type="ChEBI" id="CHEBI:15377"/>
        <dbReference type="ChEBI" id="CHEBI:30013"/>
        <dbReference type="ChEBI" id="CHEBI:43474"/>
        <dbReference type="ChEBI" id="CHEBI:61977"/>
        <dbReference type="EC" id="3.1.3.16"/>
    </reaction>
</comment>
<comment type="cofactor">
    <cofactor evidence="4">
        <name>Mn(2+)</name>
        <dbReference type="ChEBI" id="CHEBI:29035"/>
    </cofactor>
    <text evidence="4">Binds 2 manganese ions per subunit.</text>
</comment>
<comment type="activity regulation">
    <text>Activity not affected by inhibitors of phosphatases of the PPP family such as okadaic acid and cypermethrin, or by inhibitors of phosphatases of the PTP family such as sodium orthovanadate.</text>
</comment>
<comment type="biophysicochemical properties">
    <kinetics>
        <KM evidence="4">3.77 uM for MBP</KM>
        <KM evidence="4">0.62 uM for EF-Tu</KM>
        <Vmax evidence="4">120.48 pmol/min/ug enzyme toward MBP</Vmax>
        <Vmax evidence="4">2.94 pmol/min/ug enzyme toward EF-Tu</Vmax>
    </kinetics>
</comment>
<comment type="subcellular location">
    <subcellularLocation>
        <location evidence="4">Cytoplasm</location>
    </subcellularLocation>
    <subcellularLocation>
        <location evidence="4">Membrane</location>
        <topology evidence="4">Peripheral membrane protein</topology>
    </subcellularLocation>
</comment>
<comment type="disruption phenotype">
    <text evidence="4">The stp-disrupted strain is 4 times less virulent than the wild strain, demonstrating that stp is required for full virulence of L.monocytogenes in BALB/c mice.</text>
</comment>
<comment type="similarity">
    <text evidence="5">Belongs to the PP2C family.</text>
</comment>
<protein>
    <recommendedName>
        <fullName>Serine/threonine phosphatase stp</fullName>
        <ecNumber>3.1.3.16</ecNumber>
    </recommendedName>
</protein>
<organism>
    <name type="scientific">Listeria monocytogenes serovar 1/2a (strain ATCC BAA-679 / EGD-e)</name>
    <dbReference type="NCBI Taxonomy" id="169963"/>
    <lineage>
        <taxon>Bacteria</taxon>
        <taxon>Bacillati</taxon>
        <taxon>Bacillota</taxon>
        <taxon>Bacilli</taxon>
        <taxon>Bacillales</taxon>
        <taxon>Listeriaceae</taxon>
        <taxon>Listeria</taxon>
    </lineage>
</organism>
<proteinExistence type="evidence at protein level"/>
<sequence length="252" mass="28026">MHAEFRTDRGRIRHHNEDNGGVFENKDNQPIVIVADGMGGHRAGDVASEMAVRLLSDAWKETTALLTAEEIETWLRKTIQEVNKEIVLYAESEMDLNGMGTTLVAAIMAQSQVVIANVGDSRGYLLQNHVLRQLTEDHSLVHELLRTGEISKEDAMNHPRKNILLRALGVEGKVEVDTFVVPFQTSDTLLLCSDGLTNMVPETEMEEILKSKRTLSEKADVFITKANSYGGEDNITVLLVERDLTQKGRDAS</sequence>